<geneLocation type="mitochondrion"/>
<protein>
    <recommendedName>
        <fullName>Cytochrome b</fullName>
    </recommendedName>
    <alternativeName>
        <fullName>Complex III subunit 3</fullName>
    </alternativeName>
    <alternativeName>
        <fullName>Complex III subunit III</fullName>
    </alternativeName>
    <alternativeName>
        <fullName>Cytochrome b-c1 complex subunit 3</fullName>
    </alternativeName>
    <alternativeName>
        <fullName>Ubiquinol-cytochrome-c reductase complex cytochrome b subunit</fullName>
    </alternativeName>
</protein>
<feature type="chain" id="PRO_0000254866" description="Cytochrome b">
    <location>
        <begin position="1"/>
        <end position="379"/>
    </location>
</feature>
<feature type="transmembrane region" description="Helical" evidence="2">
    <location>
        <begin position="33"/>
        <end position="53"/>
    </location>
</feature>
<feature type="transmembrane region" description="Helical" evidence="2">
    <location>
        <begin position="77"/>
        <end position="98"/>
    </location>
</feature>
<feature type="transmembrane region" description="Helical" evidence="2">
    <location>
        <begin position="113"/>
        <end position="133"/>
    </location>
</feature>
<feature type="transmembrane region" description="Helical" evidence="2">
    <location>
        <begin position="178"/>
        <end position="198"/>
    </location>
</feature>
<feature type="transmembrane region" description="Helical" evidence="2">
    <location>
        <begin position="226"/>
        <end position="246"/>
    </location>
</feature>
<feature type="transmembrane region" description="Helical" evidence="2">
    <location>
        <begin position="288"/>
        <end position="308"/>
    </location>
</feature>
<feature type="transmembrane region" description="Helical" evidence="2">
    <location>
        <begin position="320"/>
        <end position="340"/>
    </location>
</feature>
<feature type="transmembrane region" description="Helical" evidence="2">
    <location>
        <begin position="347"/>
        <end position="367"/>
    </location>
</feature>
<feature type="binding site" description="axial binding residue" evidence="2">
    <location>
        <position position="83"/>
    </location>
    <ligand>
        <name>heme b</name>
        <dbReference type="ChEBI" id="CHEBI:60344"/>
        <label>b562</label>
    </ligand>
    <ligandPart>
        <name>Fe</name>
        <dbReference type="ChEBI" id="CHEBI:18248"/>
    </ligandPart>
</feature>
<feature type="binding site" description="axial binding residue" evidence="2">
    <location>
        <position position="97"/>
    </location>
    <ligand>
        <name>heme b</name>
        <dbReference type="ChEBI" id="CHEBI:60344"/>
        <label>b566</label>
    </ligand>
    <ligandPart>
        <name>Fe</name>
        <dbReference type="ChEBI" id="CHEBI:18248"/>
    </ligandPart>
</feature>
<feature type="binding site" description="axial binding residue" evidence="2">
    <location>
        <position position="182"/>
    </location>
    <ligand>
        <name>heme b</name>
        <dbReference type="ChEBI" id="CHEBI:60344"/>
        <label>b562</label>
    </ligand>
    <ligandPart>
        <name>Fe</name>
        <dbReference type="ChEBI" id="CHEBI:18248"/>
    </ligandPart>
</feature>
<feature type="binding site" description="axial binding residue" evidence="2">
    <location>
        <position position="196"/>
    </location>
    <ligand>
        <name>heme b</name>
        <dbReference type="ChEBI" id="CHEBI:60344"/>
        <label>b566</label>
    </ligand>
    <ligandPart>
        <name>Fe</name>
        <dbReference type="ChEBI" id="CHEBI:18248"/>
    </ligandPart>
</feature>
<feature type="binding site" evidence="2">
    <location>
        <position position="201"/>
    </location>
    <ligand>
        <name>a ubiquinone</name>
        <dbReference type="ChEBI" id="CHEBI:16389"/>
    </ligand>
</feature>
<sequence>MTNTRKSHPLIKIINESFIDLPTPSNISAWWNFGSLLGVCLILQILTGLFLAMHYTSDTATAFSSVTHICRDVNYGWIIRYAHANGASLFFICLFMHVGRGMYYGSHAFLETWNIGIVLLFTVMATAFMGYVLPWGQMSFWGATVITNLLSAIPYIGTDLVEWIWGGFSVDKATLTRFFAFHFILPFIISALAAVHLLFLHETGSNNPSGVSSDSDKIPFHPYFTIKDILGLLIALTTLMMLVLFSPDLLGDPDNYTPANPLNTPPHIKPEWYFLFAYAILRSIPNKLGGVLALVLSIMILAIVPLLHTSKQRSMMFRPLSQCLFWLLVADLLTLTWIGGQPVEHPFITIGQLASILYFSIILILMPIFGTIENQLLKW</sequence>
<evidence type="ECO:0000250" key="1"/>
<evidence type="ECO:0000250" key="2">
    <source>
        <dbReference type="UniProtKB" id="P00157"/>
    </source>
</evidence>
<evidence type="ECO:0000255" key="3">
    <source>
        <dbReference type="PROSITE-ProRule" id="PRU00967"/>
    </source>
</evidence>
<evidence type="ECO:0000255" key="4">
    <source>
        <dbReference type="PROSITE-ProRule" id="PRU00968"/>
    </source>
</evidence>
<proteinExistence type="inferred from homology"/>
<dbReference type="EMBL" id="AY170111">
    <property type="protein sequence ID" value="AAN85630.1"/>
    <property type="molecule type" value="Genomic_DNA"/>
</dbReference>
<dbReference type="SMR" id="Q85PN0"/>
<dbReference type="Proteomes" id="UP000472268">
    <property type="component" value="Unplaced"/>
</dbReference>
<dbReference type="GO" id="GO:0005743">
    <property type="term" value="C:mitochondrial inner membrane"/>
    <property type="evidence" value="ECO:0007669"/>
    <property type="project" value="UniProtKB-SubCell"/>
</dbReference>
<dbReference type="GO" id="GO:0045275">
    <property type="term" value="C:respiratory chain complex III"/>
    <property type="evidence" value="ECO:0007669"/>
    <property type="project" value="InterPro"/>
</dbReference>
<dbReference type="GO" id="GO:0046872">
    <property type="term" value="F:metal ion binding"/>
    <property type="evidence" value="ECO:0007669"/>
    <property type="project" value="UniProtKB-KW"/>
</dbReference>
<dbReference type="GO" id="GO:0008121">
    <property type="term" value="F:ubiquinol-cytochrome-c reductase activity"/>
    <property type="evidence" value="ECO:0007669"/>
    <property type="project" value="InterPro"/>
</dbReference>
<dbReference type="GO" id="GO:0006122">
    <property type="term" value="P:mitochondrial electron transport, ubiquinol to cytochrome c"/>
    <property type="evidence" value="ECO:0007669"/>
    <property type="project" value="TreeGrafter"/>
</dbReference>
<dbReference type="CDD" id="cd00290">
    <property type="entry name" value="cytochrome_b_C"/>
    <property type="match status" value="1"/>
</dbReference>
<dbReference type="CDD" id="cd00284">
    <property type="entry name" value="Cytochrome_b_N"/>
    <property type="match status" value="1"/>
</dbReference>
<dbReference type="FunFam" id="1.20.810.10:FF:000002">
    <property type="entry name" value="Cytochrome b"/>
    <property type="match status" value="1"/>
</dbReference>
<dbReference type="Gene3D" id="1.20.810.10">
    <property type="entry name" value="Cytochrome Bc1 Complex, Chain C"/>
    <property type="match status" value="1"/>
</dbReference>
<dbReference type="InterPro" id="IPR005798">
    <property type="entry name" value="Cyt_b/b6_C"/>
</dbReference>
<dbReference type="InterPro" id="IPR036150">
    <property type="entry name" value="Cyt_b/b6_C_sf"/>
</dbReference>
<dbReference type="InterPro" id="IPR005797">
    <property type="entry name" value="Cyt_b/b6_N"/>
</dbReference>
<dbReference type="InterPro" id="IPR027387">
    <property type="entry name" value="Cytb/b6-like_sf"/>
</dbReference>
<dbReference type="InterPro" id="IPR030689">
    <property type="entry name" value="Cytochrome_b"/>
</dbReference>
<dbReference type="InterPro" id="IPR048260">
    <property type="entry name" value="Cytochrome_b_C_euk/bac"/>
</dbReference>
<dbReference type="InterPro" id="IPR048259">
    <property type="entry name" value="Cytochrome_b_N_euk/bac"/>
</dbReference>
<dbReference type="InterPro" id="IPR016174">
    <property type="entry name" value="Di-haem_cyt_TM"/>
</dbReference>
<dbReference type="PANTHER" id="PTHR19271">
    <property type="entry name" value="CYTOCHROME B"/>
    <property type="match status" value="1"/>
</dbReference>
<dbReference type="PANTHER" id="PTHR19271:SF16">
    <property type="entry name" value="CYTOCHROME B"/>
    <property type="match status" value="1"/>
</dbReference>
<dbReference type="Pfam" id="PF00032">
    <property type="entry name" value="Cytochrom_B_C"/>
    <property type="match status" value="1"/>
</dbReference>
<dbReference type="Pfam" id="PF00033">
    <property type="entry name" value="Cytochrome_B"/>
    <property type="match status" value="1"/>
</dbReference>
<dbReference type="PIRSF" id="PIRSF038885">
    <property type="entry name" value="COB"/>
    <property type="match status" value="1"/>
</dbReference>
<dbReference type="SUPFAM" id="SSF81648">
    <property type="entry name" value="a domain/subunit of cytochrome bc1 complex (Ubiquinol-cytochrome c reductase)"/>
    <property type="match status" value="1"/>
</dbReference>
<dbReference type="SUPFAM" id="SSF81342">
    <property type="entry name" value="Transmembrane di-heme cytochromes"/>
    <property type="match status" value="1"/>
</dbReference>
<dbReference type="PROSITE" id="PS51003">
    <property type="entry name" value="CYTB_CTER"/>
    <property type="match status" value="1"/>
</dbReference>
<dbReference type="PROSITE" id="PS51002">
    <property type="entry name" value="CYTB_NTER"/>
    <property type="match status" value="1"/>
</dbReference>
<reference key="1">
    <citation type="journal article" date="2003" name="Nature">
        <title>Single origin of Malagasy Carnivora from an African ancestor.</title>
        <authorList>
            <person name="Yoder A.D."/>
            <person name="Burns M.M."/>
            <person name="Zehr S."/>
            <person name="Delefosse T."/>
            <person name="Veron G."/>
            <person name="Goodman S.M."/>
            <person name="Flynn J.J."/>
        </authorList>
    </citation>
    <scope>NUCLEOTIDE SEQUENCE [GENOMIC DNA]</scope>
</reference>
<organism>
    <name type="scientific">Suricata suricatta</name>
    <name type="common">Meerkat</name>
    <dbReference type="NCBI Taxonomy" id="37032"/>
    <lineage>
        <taxon>Eukaryota</taxon>
        <taxon>Metazoa</taxon>
        <taxon>Chordata</taxon>
        <taxon>Craniata</taxon>
        <taxon>Vertebrata</taxon>
        <taxon>Euteleostomi</taxon>
        <taxon>Mammalia</taxon>
        <taxon>Eutheria</taxon>
        <taxon>Laurasiatheria</taxon>
        <taxon>Carnivora</taxon>
        <taxon>Feliformia</taxon>
        <taxon>Herpestidae</taxon>
        <taxon>Suricata</taxon>
    </lineage>
</organism>
<accession>Q85PN0</accession>
<comment type="function">
    <text evidence="2">Component of the ubiquinol-cytochrome c reductase complex (complex III or cytochrome b-c1 complex) that is part of the mitochondrial respiratory chain. The b-c1 complex mediates electron transfer from ubiquinol to cytochrome c. Contributes to the generation of a proton gradient across the mitochondrial membrane that is then used for ATP synthesis.</text>
</comment>
<comment type="cofactor">
    <cofactor evidence="2">
        <name>heme b</name>
        <dbReference type="ChEBI" id="CHEBI:60344"/>
    </cofactor>
    <text evidence="2">Binds 2 heme b groups non-covalently.</text>
</comment>
<comment type="subunit">
    <text evidence="2">The cytochrome bc1 complex contains 11 subunits: 3 respiratory subunits (MT-CYB, CYC1 and UQCRFS1), 2 core proteins (UQCRC1 and UQCRC2) and 6 low-molecular weight proteins (UQCRH/QCR6, UQCRB/QCR7, UQCRQ/QCR8, UQCR10/QCR9, UQCR11/QCR10 and a cleavage product of UQCRFS1). This cytochrome bc1 complex then forms a dimer.</text>
</comment>
<comment type="subcellular location">
    <subcellularLocation>
        <location evidence="2">Mitochondrion inner membrane</location>
        <topology evidence="2">Multi-pass membrane protein</topology>
    </subcellularLocation>
</comment>
<comment type="miscellaneous">
    <text evidence="1">Heme 1 (or BL or b562) is low-potential and absorbs at about 562 nm, and heme 2 (or BH or b566) is high-potential and absorbs at about 566 nm.</text>
</comment>
<comment type="similarity">
    <text evidence="3 4">Belongs to the cytochrome b family.</text>
</comment>
<comment type="caution">
    <text evidence="2">The full-length protein contains only eight transmembrane helices, not nine as predicted by bioinformatics tools.</text>
</comment>
<name>CYB_SURSU</name>
<gene>
    <name type="primary">MT-CYB</name>
    <name type="synonym">COB</name>
    <name type="synonym">CYTB</name>
    <name type="synonym">MTCYB</name>
</gene>
<keyword id="KW-0249">Electron transport</keyword>
<keyword id="KW-0349">Heme</keyword>
<keyword id="KW-0408">Iron</keyword>
<keyword id="KW-0472">Membrane</keyword>
<keyword id="KW-0479">Metal-binding</keyword>
<keyword id="KW-0496">Mitochondrion</keyword>
<keyword id="KW-0999">Mitochondrion inner membrane</keyword>
<keyword id="KW-1185">Reference proteome</keyword>
<keyword id="KW-0679">Respiratory chain</keyword>
<keyword id="KW-0812">Transmembrane</keyword>
<keyword id="KW-1133">Transmembrane helix</keyword>
<keyword id="KW-0813">Transport</keyword>
<keyword id="KW-0830">Ubiquinone</keyword>